<proteinExistence type="evidence at transcript level"/>
<feature type="signal peptide" evidence="2">
    <location>
        <begin position="1"/>
        <end position="19"/>
    </location>
</feature>
<feature type="propeptide" id="PRO_0000352681" evidence="2">
    <location>
        <begin position="20"/>
        <end position="62"/>
    </location>
</feature>
<feature type="peptide" id="PRO_0000352682" description="Defensin-A1">
    <location>
        <begin position="63"/>
        <end position="94"/>
    </location>
</feature>
<feature type="propeptide" id="PRO_0000352683" evidence="2">
    <location>
        <begin position="97"/>
        <end position="98"/>
    </location>
</feature>
<feature type="disulfide bond" evidence="1">
    <location>
        <begin position="67"/>
        <end position="94"/>
    </location>
</feature>
<feature type="disulfide bond" evidence="1">
    <location>
        <begin position="69"/>
        <end position="83"/>
    </location>
</feature>
<feature type="disulfide bond" evidence="1">
    <location>
        <begin position="73"/>
        <end position="93"/>
    </location>
</feature>
<comment type="function">
    <text evidence="1">Has antimicrobial activity.</text>
</comment>
<comment type="subcellular location">
    <subcellularLocation>
        <location evidence="1">Secreted</location>
    </subcellularLocation>
</comment>
<comment type="tissue specificity">
    <text evidence="3">Highly expressed in intestine, and expressed at lower levels in lung and spleen.</text>
</comment>
<comment type="similarity">
    <text evidence="6">Belongs to the alpha-defensin family.</text>
</comment>
<comment type="online information" name="Platypus resources">
    <link uri="https://www.twinkl.ch/search?q=platypus"/>
</comment>
<name>DEFA1_ORNAN</name>
<evidence type="ECO:0000250" key="1"/>
<evidence type="ECO:0000255" key="2"/>
<evidence type="ECO:0000269" key="3">
    <source>
    </source>
</evidence>
<evidence type="ECO:0000303" key="4">
    <source>
    </source>
</evidence>
<evidence type="ECO:0000303" key="5">
    <source>
    </source>
</evidence>
<evidence type="ECO:0000305" key="6"/>
<evidence type="ECO:0000305" key="7">
    <source>
    </source>
</evidence>
<evidence type="ECO:0000305" key="8">
    <source>
    </source>
</evidence>
<organism>
    <name type="scientific">Ornithorhynchus anatinus</name>
    <name type="common">Duckbill platypus</name>
    <dbReference type="NCBI Taxonomy" id="9258"/>
    <lineage>
        <taxon>Eukaryota</taxon>
        <taxon>Metazoa</taxon>
        <taxon>Chordata</taxon>
        <taxon>Craniata</taxon>
        <taxon>Vertebrata</taxon>
        <taxon>Euteleostomi</taxon>
        <taxon>Mammalia</taxon>
        <taxon>Monotremata</taxon>
        <taxon>Ornithorhynchidae</taxon>
        <taxon>Ornithorhynchus</taxon>
    </lineage>
</organism>
<protein>
    <recommendedName>
        <fullName evidence="7 8">Defensin-A1</fullName>
        <shortName evidence="4">DefA1</shortName>
        <shortName evidence="5">OaDefA1</shortName>
    </recommendedName>
</protein>
<accession>P0C8A1</accession>
<sequence>MQTLSFLLALLFLVAQTPAQPTGEGEKGGTIQEPEATEAQDTAAVLMAAGAADGDDSDTKQLDTTFCRCRVSCNILEKYSGKCELSGRTARICCRKIK</sequence>
<dbReference type="SMR" id="P0C8A1"/>
<dbReference type="FunCoup" id="P0C8A1">
    <property type="interactions" value="230"/>
</dbReference>
<dbReference type="Ensembl" id="ENSOANT00000040883.2">
    <property type="protein sequence ID" value="ENSOANP00000031636.2"/>
    <property type="gene ID" value="ENSOANG00000031301.2"/>
</dbReference>
<dbReference type="GeneTree" id="ENSGT01000000220353"/>
<dbReference type="InParanoid" id="P0C8A1"/>
<dbReference type="OMA" id="RICCRKI"/>
<dbReference type="Proteomes" id="UP000002279">
    <property type="component" value="Chromosome X2"/>
</dbReference>
<dbReference type="Bgee" id="ENSOANG00000031301">
    <property type="expression patterns" value="Expressed in testis"/>
</dbReference>
<dbReference type="GO" id="GO:0005615">
    <property type="term" value="C:extracellular space"/>
    <property type="evidence" value="ECO:0007669"/>
    <property type="project" value="InterPro"/>
</dbReference>
<dbReference type="GO" id="GO:0042742">
    <property type="term" value="P:defense response to bacterium"/>
    <property type="evidence" value="ECO:0007669"/>
    <property type="project" value="UniProtKB-KW"/>
</dbReference>
<dbReference type="InterPro" id="IPR016327">
    <property type="entry name" value="Alpha-defensin"/>
</dbReference>
<dbReference type="InterPro" id="IPR006081">
    <property type="entry name" value="Alpha-defensin_C"/>
</dbReference>
<dbReference type="PANTHER" id="PTHR11876">
    <property type="entry name" value="ALPHA-DEFENSIN 1"/>
    <property type="match status" value="1"/>
</dbReference>
<dbReference type="PANTHER" id="PTHR11876:SF28">
    <property type="entry name" value="ALPHA-DEFENSIN 1"/>
    <property type="match status" value="1"/>
</dbReference>
<dbReference type="PIRSF" id="PIRSF001875">
    <property type="entry name" value="Alpha-defensin"/>
    <property type="match status" value="1"/>
</dbReference>
<dbReference type="PROSITE" id="PS00269">
    <property type="entry name" value="DEFENSIN"/>
    <property type="match status" value="1"/>
</dbReference>
<keyword id="KW-0044">Antibiotic</keyword>
<keyword id="KW-0929">Antimicrobial</keyword>
<keyword id="KW-0165">Cleavage on pair of basic residues</keyword>
<keyword id="KW-0211">Defensin</keyword>
<keyword id="KW-1015">Disulfide bond</keyword>
<keyword id="KW-1185">Reference proteome</keyword>
<keyword id="KW-0964">Secreted</keyword>
<keyword id="KW-0732">Signal</keyword>
<reference key="1">
    <citation type="journal article" date="2008" name="Genome Res.">
        <title>Defensins and the convergent evolution of platypus and reptile venom genes.</title>
        <authorList>
            <person name="Whittington C.M."/>
            <person name="Papenfuss A.T."/>
            <person name="Bansal P."/>
            <person name="Torres A.M."/>
            <person name="Wong E.S."/>
            <person name="Deakin J.E."/>
            <person name="Graves T."/>
            <person name="Alsop A."/>
            <person name="Schatzkamer K."/>
            <person name="Kremitzki C."/>
            <person name="Ponting C.P."/>
            <person name="Temple-Smith P."/>
            <person name="Warren W.C."/>
            <person name="Kuchel P.W."/>
            <person name="Belov K."/>
        </authorList>
    </citation>
    <scope>NUCLEOTIDE SEQUENCE [MRNA]</scope>
</reference>
<reference key="2">
    <citation type="journal article" date="2008" name="Toxicon">
        <title>Expression patterns of platypus defensin and related venom genes across a range of tissue types reveal the possibility of broader functions for OvDLPs than previously suspected.</title>
        <authorList>
            <person name="Whittington C.M."/>
            <person name="Papenfuss A.T."/>
            <person name="Kuchel P.W."/>
            <person name="Belov K."/>
        </authorList>
    </citation>
    <scope>TISSUE SPECIFICITY</scope>
</reference>